<gene>
    <name evidence="1" type="primary">gpmA</name>
    <name type="ordered locus">SP_1655</name>
</gene>
<sequence>MVKLVFARHGESEWNKANLFTGWADVDLSEKGTQQAIDAGKLIKEAGIEFDQAYTSVLKRAIKTTNLALEASDQLWVPVEKSWRLNERHYGGLTGKNKAEAAEQFGDEQVHIWRRSYDVLPPNMDRDDEHSAHTDRRYASLDDSVIPDAENLKVTLERALPFWEDKIAPALKDGKNVFVGAHGNSIRALVKHIKGLSDDEIMDVEIPNFPPLVFEFDEKLNVVSEYYLGK</sequence>
<dbReference type="EC" id="5.4.2.11" evidence="1"/>
<dbReference type="EMBL" id="AJ131985">
    <property type="protein sequence ID" value="CAB51328.1"/>
    <property type="molecule type" value="Genomic_DNA"/>
</dbReference>
<dbReference type="EMBL" id="AE005672">
    <property type="protein sequence ID" value="AAK75734.1"/>
    <property type="molecule type" value="Genomic_DNA"/>
</dbReference>
<dbReference type="PIR" id="E95192">
    <property type="entry name" value="E95192"/>
</dbReference>
<dbReference type="RefSeq" id="WP_000240129.1">
    <property type="nucleotide sequence ID" value="NZ_CP155539.1"/>
</dbReference>
<dbReference type="SMR" id="P0A3Y3"/>
<dbReference type="PaxDb" id="170187-SP_1655"/>
<dbReference type="EnsemblBacteria" id="AAK75734">
    <property type="protein sequence ID" value="AAK75734"/>
    <property type="gene ID" value="SP_1655"/>
</dbReference>
<dbReference type="KEGG" id="spn:SP_1655"/>
<dbReference type="eggNOG" id="COG0588">
    <property type="taxonomic scope" value="Bacteria"/>
</dbReference>
<dbReference type="PhylomeDB" id="P0A3Y3"/>
<dbReference type="BioCyc" id="SPNE170187:G1FZB-1676-MONOMER"/>
<dbReference type="UniPathway" id="UPA00109">
    <property type="reaction ID" value="UER00186"/>
</dbReference>
<dbReference type="Proteomes" id="UP000000585">
    <property type="component" value="Chromosome"/>
</dbReference>
<dbReference type="GO" id="GO:0004619">
    <property type="term" value="F:phosphoglycerate mutase activity"/>
    <property type="evidence" value="ECO:0007669"/>
    <property type="project" value="UniProtKB-EC"/>
</dbReference>
<dbReference type="GO" id="GO:0006094">
    <property type="term" value="P:gluconeogenesis"/>
    <property type="evidence" value="ECO:0007669"/>
    <property type="project" value="UniProtKB-UniRule"/>
</dbReference>
<dbReference type="GO" id="GO:0006096">
    <property type="term" value="P:glycolytic process"/>
    <property type="evidence" value="ECO:0007669"/>
    <property type="project" value="UniProtKB-UniRule"/>
</dbReference>
<dbReference type="CDD" id="cd07067">
    <property type="entry name" value="HP_PGM_like"/>
    <property type="match status" value="1"/>
</dbReference>
<dbReference type="FunFam" id="3.40.50.1240:FF:000003">
    <property type="entry name" value="2,3-bisphosphoglycerate-dependent phosphoglycerate mutase"/>
    <property type="match status" value="1"/>
</dbReference>
<dbReference type="Gene3D" id="3.40.50.1240">
    <property type="entry name" value="Phosphoglycerate mutase-like"/>
    <property type="match status" value="1"/>
</dbReference>
<dbReference type="HAMAP" id="MF_01039">
    <property type="entry name" value="PGAM_GpmA"/>
    <property type="match status" value="1"/>
</dbReference>
<dbReference type="InterPro" id="IPR013078">
    <property type="entry name" value="His_Pase_superF_clade-1"/>
</dbReference>
<dbReference type="InterPro" id="IPR029033">
    <property type="entry name" value="His_PPase_superfam"/>
</dbReference>
<dbReference type="InterPro" id="IPR005952">
    <property type="entry name" value="Phosphogly_mut1"/>
</dbReference>
<dbReference type="NCBIfam" id="TIGR01258">
    <property type="entry name" value="pgm_1"/>
    <property type="match status" value="1"/>
</dbReference>
<dbReference type="NCBIfam" id="NF010713">
    <property type="entry name" value="PRK14115.1"/>
    <property type="match status" value="1"/>
</dbReference>
<dbReference type="NCBIfam" id="NF010715">
    <property type="entry name" value="PRK14117.1"/>
    <property type="match status" value="1"/>
</dbReference>
<dbReference type="PANTHER" id="PTHR11931">
    <property type="entry name" value="PHOSPHOGLYCERATE MUTASE"/>
    <property type="match status" value="1"/>
</dbReference>
<dbReference type="Pfam" id="PF00300">
    <property type="entry name" value="His_Phos_1"/>
    <property type="match status" value="1"/>
</dbReference>
<dbReference type="PIRSF" id="PIRSF000709">
    <property type="entry name" value="6PFK_2-Ptase"/>
    <property type="match status" value="1"/>
</dbReference>
<dbReference type="SMART" id="SM00855">
    <property type="entry name" value="PGAM"/>
    <property type="match status" value="1"/>
</dbReference>
<dbReference type="SUPFAM" id="SSF53254">
    <property type="entry name" value="Phosphoglycerate mutase-like"/>
    <property type="match status" value="1"/>
</dbReference>
<feature type="chain" id="PRO_0000179925" description="2,3-bisphosphoglycerate-dependent phosphoglycerate mutase">
    <location>
        <begin position="1"/>
        <end position="230"/>
    </location>
</feature>
<feature type="active site" description="Tele-phosphohistidine intermediate" evidence="1">
    <location>
        <position position="9"/>
    </location>
</feature>
<feature type="active site" description="Proton donor/acceptor" evidence="1">
    <location>
        <position position="87"/>
    </location>
</feature>
<feature type="binding site" evidence="1">
    <location>
        <begin position="8"/>
        <end position="15"/>
    </location>
    <ligand>
        <name>substrate</name>
    </ligand>
</feature>
<feature type="binding site" evidence="1">
    <location>
        <begin position="21"/>
        <end position="22"/>
    </location>
    <ligand>
        <name>substrate</name>
    </ligand>
</feature>
<feature type="binding site" evidence="1">
    <location>
        <position position="60"/>
    </location>
    <ligand>
        <name>substrate</name>
    </ligand>
</feature>
<feature type="binding site" evidence="1">
    <location>
        <begin position="87"/>
        <end position="90"/>
    </location>
    <ligand>
        <name>substrate</name>
    </ligand>
</feature>
<feature type="binding site" evidence="1">
    <location>
        <position position="98"/>
    </location>
    <ligand>
        <name>substrate</name>
    </ligand>
</feature>
<feature type="binding site" evidence="1">
    <location>
        <begin position="114"/>
        <end position="115"/>
    </location>
    <ligand>
        <name>substrate</name>
    </ligand>
</feature>
<feature type="binding site" evidence="1">
    <location>
        <begin position="183"/>
        <end position="184"/>
    </location>
    <ligand>
        <name>substrate</name>
    </ligand>
</feature>
<feature type="site" description="Transition state stabilizer" evidence="1">
    <location>
        <position position="182"/>
    </location>
</feature>
<feature type="sequence conflict" description="In Ref. 1; CAB51328." evidence="2" ref="1">
    <original>E</original>
    <variation>K</variation>
    <location>
        <position position="49"/>
    </location>
</feature>
<organism>
    <name type="scientific">Streptococcus pneumoniae serotype 4 (strain ATCC BAA-334 / TIGR4)</name>
    <dbReference type="NCBI Taxonomy" id="170187"/>
    <lineage>
        <taxon>Bacteria</taxon>
        <taxon>Bacillati</taxon>
        <taxon>Bacillota</taxon>
        <taxon>Bacilli</taxon>
        <taxon>Lactobacillales</taxon>
        <taxon>Streptococcaceae</taxon>
        <taxon>Streptococcus</taxon>
    </lineage>
</organism>
<accession>P0A3Y3</accession>
<accession>Q97PG5</accession>
<accession>Q9X9S2</accession>
<proteinExistence type="inferred from homology"/>
<evidence type="ECO:0000255" key="1">
    <source>
        <dbReference type="HAMAP-Rule" id="MF_01039"/>
    </source>
</evidence>
<evidence type="ECO:0000305" key="2"/>
<keyword id="KW-0312">Gluconeogenesis</keyword>
<keyword id="KW-0324">Glycolysis</keyword>
<keyword id="KW-0413">Isomerase</keyword>
<keyword id="KW-1185">Reference proteome</keyword>
<reference key="1">
    <citation type="journal article" date="1999" name="J. Exp. Med.">
        <title>A single gene (tts) located outside the cap locus directs the formation of Streptococcus pneumoniae type 37 capsular polysaccharide. Type 37 pneumococci are natural, genetically binary strains.</title>
        <authorList>
            <person name="Llull D."/>
            <person name="Munoz R."/>
            <person name="Lopez R."/>
            <person name="Garcia E."/>
        </authorList>
    </citation>
    <scope>NUCLEOTIDE SEQUENCE [GENOMIC DNA]</scope>
    <source>
        <strain>1235/89</strain>
    </source>
</reference>
<reference key="2">
    <citation type="journal article" date="2001" name="Science">
        <title>Complete genome sequence of a virulent isolate of Streptococcus pneumoniae.</title>
        <authorList>
            <person name="Tettelin H."/>
            <person name="Nelson K.E."/>
            <person name="Paulsen I.T."/>
            <person name="Eisen J.A."/>
            <person name="Read T.D."/>
            <person name="Peterson S.N."/>
            <person name="Heidelberg J.F."/>
            <person name="DeBoy R.T."/>
            <person name="Haft D.H."/>
            <person name="Dodson R.J."/>
            <person name="Durkin A.S."/>
            <person name="Gwinn M.L."/>
            <person name="Kolonay J.F."/>
            <person name="Nelson W.C."/>
            <person name="Peterson J.D."/>
            <person name="Umayam L.A."/>
            <person name="White O."/>
            <person name="Salzberg S.L."/>
            <person name="Lewis M.R."/>
            <person name="Radune D."/>
            <person name="Holtzapple E.K."/>
            <person name="Khouri H.M."/>
            <person name="Wolf A.M."/>
            <person name="Utterback T.R."/>
            <person name="Hansen C.L."/>
            <person name="McDonald L.A."/>
            <person name="Feldblyum T.V."/>
            <person name="Angiuoli S.V."/>
            <person name="Dickinson T."/>
            <person name="Hickey E.K."/>
            <person name="Holt I.E."/>
            <person name="Loftus B.J."/>
            <person name="Yang F."/>
            <person name="Smith H.O."/>
            <person name="Venter J.C."/>
            <person name="Dougherty B.A."/>
            <person name="Morrison D.A."/>
            <person name="Hollingshead S.K."/>
            <person name="Fraser C.M."/>
        </authorList>
    </citation>
    <scope>NUCLEOTIDE SEQUENCE [LARGE SCALE GENOMIC DNA]</scope>
    <source>
        <strain>ATCC BAA-334 / TIGR4</strain>
    </source>
</reference>
<protein>
    <recommendedName>
        <fullName evidence="1">2,3-bisphosphoglycerate-dependent phosphoglycerate mutase</fullName>
        <shortName evidence="1">BPG-dependent PGAM</shortName>
        <shortName evidence="1">PGAM</shortName>
        <shortName evidence="1">Phosphoglyceromutase</shortName>
        <shortName evidence="1">dPGM</shortName>
        <ecNumber evidence="1">5.4.2.11</ecNumber>
    </recommendedName>
</protein>
<comment type="function">
    <text evidence="1">Catalyzes the interconversion of 2-phosphoglycerate and 3-phosphoglycerate.</text>
</comment>
<comment type="catalytic activity">
    <reaction evidence="1">
        <text>(2R)-2-phosphoglycerate = (2R)-3-phosphoglycerate</text>
        <dbReference type="Rhea" id="RHEA:15901"/>
        <dbReference type="ChEBI" id="CHEBI:58272"/>
        <dbReference type="ChEBI" id="CHEBI:58289"/>
        <dbReference type="EC" id="5.4.2.11"/>
    </reaction>
</comment>
<comment type="pathway">
    <text evidence="1">Carbohydrate degradation; glycolysis; pyruvate from D-glyceraldehyde 3-phosphate: step 3/5.</text>
</comment>
<comment type="similarity">
    <text evidence="1">Belongs to the phosphoglycerate mutase family. BPG-dependent PGAM subfamily.</text>
</comment>
<name>GPMA_STRPN</name>